<reference key="1">
    <citation type="journal article" date="2007" name="J. Exp. Zool. B Mol. Dev. Evol.">
        <title>Venomous auger snail Hastula (Impages) hectica (Linnaeus, 1758): molecular phylogeny, foregut anatomy and comparative toxinology.</title>
        <authorList>
            <person name="Imperial J.S."/>
            <person name="Kantor Y."/>
            <person name="Watkins M."/>
            <person name="Heralde F.M. III"/>
            <person name="Stevenson B."/>
            <person name="Chen P."/>
            <person name="Hansson K."/>
            <person name="Stenflo J."/>
            <person name="Ownby J.P."/>
            <person name="Bouchet P."/>
            <person name="Olivera B.M."/>
        </authorList>
    </citation>
    <scope>PROTEIN SEQUENCE</scope>
    <scope>FUNCTION</scope>
    <source>
        <tissue>Venom</tissue>
    </source>
</reference>
<keyword id="KW-0903">Direct protein sequencing</keyword>
<keyword id="KW-1015">Disulfide bond</keyword>
<keyword id="KW-0960">Knottin</keyword>
<keyword id="KW-0528">Neurotoxin</keyword>
<keyword id="KW-0964">Secreted</keyword>
<keyword id="KW-0800">Toxin</keyword>
<dbReference type="GO" id="GO:0005576">
    <property type="term" value="C:extracellular region"/>
    <property type="evidence" value="ECO:0007669"/>
    <property type="project" value="UniProtKB-SubCell"/>
</dbReference>
<dbReference type="GO" id="GO:0090729">
    <property type="term" value="F:toxin activity"/>
    <property type="evidence" value="ECO:0007669"/>
    <property type="project" value="UniProtKB-KW"/>
</dbReference>
<comment type="function">
    <text evidence="2">Causes abnormal twist followed by immobility when injected into C.elegans.</text>
</comment>
<comment type="subcellular location">
    <subcellularLocation>
        <location>Secreted</location>
    </subcellularLocation>
</comment>
<comment type="tissue specificity">
    <text>Expressed by the venom duct.</text>
</comment>
<comment type="domain">
    <text evidence="1">The presence of a 'disulfide through disulfide knot' structurally defines this protein as a knottin.</text>
</comment>
<comment type="domain">
    <text>The cysteine framework is VI/VII (C-C-CC-C-C).</text>
</comment>
<evidence type="ECO:0000250" key="1"/>
<evidence type="ECO:0000269" key="2">
    <source>
    </source>
</evidence>
<accession>P0CI08</accession>
<feature type="peptide" id="PRO_0000402139" description="Augerpeptide hhe7a">
    <location>
        <begin position="1"/>
        <end position="23"/>
    </location>
</feature>
<feature type="disulfide bond" evidence="1">
    <location>
        <begin position="3"/>
        <end position="11"/>
    </location>
</feature>
<feature type="disulfide bond" evidence="1">
    <location>
        <begin position="6"/>
        <end position="19"/>
    </location>
</feature>
<feature type="disulfide bond" evidence="1">
    <location>
        <begin position="10"/>
        <end position="22"/>
    </location>
</feature>
<protein>
    <recommendedName>
        <fullName>Augerpeptide hhe7a</fullName>
    </recommendedName>
</protein>
<sequence>ARCEQCPSYCCQSDSPPECDGCE</sequence>
<proteinExistence type="evidence at protein level"/>
<organism>
    <name type="scientific">Hastula hectica</name>
    <name type="common">Sea snail</name>
    <name type="synonym">Impages hectica</name>
    <dbReference type="NCBI Taxonomy" id="745793"/>
    <lineage>
        <taxon>Eukaryota</taxon>
        <taxon>Metazoa</taxon>
        <taxon>Spiralia</taxon>
        <taxon>Lophotrochozoa</taxon>
        <taxon>Mollusca</taxon>
        <taxon>Gastropoda</taxon>
        <taxon>Caenogastropoda</taxon>
        <taxon>Neogastropoda</taxon>
        <taxon>Conoidea</taxon>
        <taxon>Terebridae</taxon>
        <taxon>Hastula</taxon>
    </lineage>
</organism>
<name>TE7A_HASHE</name>